<dbReference type="EC" id="1.15.1.1" evidence="1"/>
<dbReference type="EMBL" id="AJ235272">
    <property type="protein sequence ID" value="CAA14984.1"/>
    <property type="molecule type" value="Genomic_DNA"/>
</dbReference>
<dbReference type="PIR" id="F71657">
    <property type="entry name" value="F71657"/>
</dbReference>
<dbReference type="RefSeq" id="NP_220908.1">
    <property type="nucleotide sequence ID" value="NC_000963.1"/>
</dbReference>
<dbReference type="RefSeq" id="WP_004599063.1">
    <property type="nucleotide sequence ID" value="NC_000963.1"/>
</dbReference>
<dbReference type="SMR" id="Q9ZD15"/>
<dbReference type="STRING" id="272947.gene:17555615"/>
<dbReference type="EnsemblBacteria" id="CAA14984">
    <property type="protein sequence ID" value="CAA14984"/>
    <property type="gene ID" value="CAA14984"/>
</dbReference>
<dbReference type="KEGG" id="rpr:RP535"/>
<dbReference type="PATRIC" id="fig|272947.5.peg.545"/>
<dbReference type="eggNOG" id="COG0605">
    <property type="taxonomic scope" value="Bacteria"/>
</dbReference>
<dbReference type="HOGENOM" id="CLU_031625_0_0_5"/>
<dbReference type="OrthoDB" id="9803125at2"/>
<dbReference type="Proteomes" id="UP000002480">
    <property type="component" value="Chromosome"/>
</dbReference>
<dbReference type="GO" id="GO:0046872">
    <property type="term" value="F:metal ion binding"/>
    <property type="evidence" value="ECO:0007669"/>
    <property type="project" value="UniProtKB-KW"/>
</dbReference>
<dbReference type="GO" id="GO:0004784">
    <property type="term" value="F:superoxide dismutase activity"/>
    <property type="evidence" value="ECO:0007669"/>
    <property type="project" value="UniProtKB-EC"/>
</dbReference>
<dbReference type="Gene3D" id="1.10.287.990">
    <property type="entry name" value="Fe,Mn superoxide dismutase (SOD) domain"/>
    <property type="match status" value="1"/>
</dbReference>
<dbReference type="Gene3D" id="3.55.40.20">
    <property type="entry name" value="Iron/manganese superoxide dismutase, C-terminal domain"/>
    <property type="match status" value="1"/>
</dbReference>
<dbReference type="InterPro" id="IPR001189">
    <property type="entry name" value="Mn/Fe_SOD"/>
</dbReference>
<dbReference type="InterPro" id="IPR019833">
    <property type="entry name" value="Mn/Fe_SOD_BS"/>
</dbReference>
<dbReference type="InterPro" id="IPR019832">
    <property type="entry name" value="Mn/Fe_SOD_C"/>
</dbReference>
<dbReference type="InterPro" id="IPR019831">
    <property type="entry name" value="Mn/Fe_SOD_N"/>
</dbReference>
<dbReference type="InterPro" id="IPR036324">
    <property type="entry name" value="Mn/Fe_SOD_N_sf"/>
</dbReference>
<dbReference type="InterPro" id="IPR036314">
    <property type="entry name" value="SOD_C_sf"/>
</dbReference>
<dbReference type="PANTHER" id="PTHR42769">
    <property type="entry name" value="SUPEROXIDE DISMUTASE"/>
    <property type="match status" value="1"/>
</dbReference>
<dbReference type="PANTHER" id="PTHR42769:SF3">
    <property type="entry name" value="SUPEROXIDE DISMUTASE [FE] 2, CHLOROPLASTIC"/>
    <property type="match status" value="1"/>
</dbReference>
<dbReference type="Pfam" id="PF02777">
    <property type="entry name" value="Sod_Fe_C"/>
    <property type="match status" value="1"/>
</dbReference>
<dbReference type="Pfam" id="PF00081">
    <property type="entry name" value="Sod_Fe_N"/>
    <property type="match status" value="1"/>
</dbReference>
<dbReference type="PIRSF" id="PIRSF000349">
    <property type="entry name" value="SODismutase"/>
    <property type="match status" value="1"/>
</dbReference>
<dbReference type="PRINTS" id="PR01703">
    <property type="entry name" value="MNSODISMTASE"/>
</dbReference>
<dbReference type="SUPFAM" id="SSF54719">
    <property type="entry name" value="Fe,Mn superoxide dismutase (SOD), C-terminal domain"/>
    <property type="match status" value="1"/>
</dbReference>
<dbReference type="SUPFAM" id="SSF46609">
    <property type="entry name" value="Fe,Mn superoxide dismutase (SOD), N-terminal domain"/>
    <property type="match status" value="1"/>
</dbReference>
<dbReference type="PROSITE" id="PS00088">
    <property type="entry name" value="SOD_MN"/>
    <property type="match status" value="1"/>
</dbReference>
<accession>Q9ZD15</accession>
<keyword id="KW-0408">Iron</keyword>
<keyword id="KW-0464">Manganese</keyword>
<keyword id="KW-0479">Metal-binding</keyword>
<keyword id="KW-0560">Oxidoreductase</keyword>
<keyword id="KW-1185">Reference proteome</keyword>
<organism>
    <name type="scientific">Rickettsia prowazekii (strain Madrid E)</name>
    <dbReference type="NCBI Taxonomy" id="272947"/>
    <lineage>
        <taxon>Bacteria</taxon>
        <taxon>Pseudomonadati</taxon>
        <taxon>Pseudomonadota</taxon>
        <taxon>Alphaproteobacteria</taxon>
        <taxon>Rickettsiales</taxon>
        <taxon>Rickettsiaceae</taxon>
        <taxon>Rickettsieae</taxon>
        <taxon>Rickettsia</taxon>
        <taxon>typhus group</taxon>
    </lineage>
</organism>
<proteinExistence type="inferred from homology"/>
<protein>
    <recommendedName>
        <fullName>Superoxide dismutase [Mn/Fe]</fullName>
        <ecNumber evidence="1">1.15.1.1</ecNumber>
    </recommendedName>
</protein>
<comment type="function">
    <text evidence="1">Destroys superoxide anion radicals which are normally produced within the cells and which are toxic to biological systems. Catalyzes the dismutation of superoxide anion radicals into O2 and H2O2 by successive reduction and oxidation of the transition metal ion at the active site.</text>
</comment>
<comment type="catalytic activity">
    <reaction evidence="1">
        <text>2 superoxide + 2 H(+) = H2O2 + O2</text>
        <dbReference type="Rhea" id="RHEA:20696"/>
        <dbReference type="ChEBI" id="CHEBI:15378"/>
        <dbReference type="ChEBI" id="CHEBI:15379"/>
        <dbReference type="ChEBI" id="CHEBI:16240"/>
        <dbReference type="ChEBI" id="CHEBI:18421"/>
        <dbReference type="EC" id="1.15.1.1"/>
    </reaction>
    <physiologicalReaction direction="left-to-right" evidence="1">
        <dbReference type="Rhea" id="RHEA:20697"/>
    </physiologicalReaction>
</comment>
<comment type="cofactor">
    <cofactor evidence="1">
        <name>Mn(2+)</name>
        <dbReference type="ChEBI" id="CHEBI:29035"/>
    </cofactor>
    <cofactor evidence="1">
        <name>Fe(3+)</name>
        <dbReference type="ChEBI" id="CHEBI:29034"/>
    </cofactor>
    <text evidence="1">Binds 1 Mn(2+) or Fe(3+) ion per subunit.</text>
</comment>
<comment type="similarity">
    <text evidence="2">Belongs to the iron/manganese superoxide dismutase family.</text>
</comment>
<gene>
    <name type="primary">sodB</name>
    <name type="ordered locus">RP535</name>
</gene>
<reference key="1">
    <citation type="journal article" date="1998" name="Nature">
        <title>The genome sequence of Rickettsia prowazekii and the origin of mitochondria.</title>
        <authorList>
            <person name="Andersson S.G.E."/>
            <person name="Zomorodipour A."/>
            <person name="Andersson J.O."/>
            <person name="Sicheritz-Ponten T."/>
            <person name="Alsmark U.C.M."/>
            <person name="Podowski R.M."/>
            <person name="Naeslund A.K."/>
            <person name="Eriksson A.-S."/>
            <person name="Winkler H.H."/>
            <person name="Kurland C.G."/>
        </authorList>
    </citation>
    <scope>NUCLEOTIDE SEQUENCE [LARGE SCALE GENOMIC DNA]</scope>
    <source>
        <strain>Madrid E</strain>
    </source>
</reference>
<name>SODF_RICPR</name>
<sequence>MTYCSKANQPSYPFILPDLPYDKESFKPHFTRETFDYHHGKHHNSYVQNLNNLIKDREELQKKDLEEIIEWSSQNAEVAILNNASQIWNHTFFWYSIKPHGGGKPSGKVFEQISKDFGSFEQFCAQFKQEAVGQFGSGWTWVVYHDNKLQIIKTSNAGTPIVNFMKPILACDVWEHAYYIDYRNKRSDYIDIFIRHMINWKFVEDNLIQ</sequence>
<evidence type="ECO:0000250" key="1">
    <source>
        <dbReference type="UniProtKB" id="P80293"/>
    </source>
</evidence>
<evidence type="ECO:0000305" key="2"/>
<feature type="chain" id="PRO_0000159999" description="Superoxide dismutase [Mn/Fe]">
    <location>
        <begin position="1"/>
        <end position="209"/>
    </location>
</feature>
<feature type="binding site" evidence="1">
    <location>
        <position position="38"/>
    </location>
    <ligand>
        <name>Fe(3+)</name>
        <dbReference type="ChEBI" id="CHEBI:29034"/>
    </ligand>
</feature>
<feature type="binding site" evidence="1">
    <location>
        <position position="38"/>
    </location>
    <ligand>
        <name>Mn(2+)</name>
        <dbReference type="ChEBI" id="CHEBI:29035"/>
    </ligand>
</feature>
<feature type="binding site" evidence="1">
    <location>
        <position position="90"/>
    </location>
    <ligand>
        <name>Fe(3+)</name>
        <dbReference type="ChEBI" id="CHEBI:29034"/>
    </ligand>
</feature>
<feature type="binding site" evidence="1">
    <location>
        <position position="90"/>
    </location>
    <ligand>
        <name>Mn(2+)</name>
        <dbReference type="ChEBI" id="CHEBI:29035"/>
    </ligand>
</feature>
<feature type="binding site" evidence="1">
    <location>
        <position position="172"/>
    </location>
    <ligand>
        <name>Fe(3+)</name>
        <dbReference type="ChEBI" id="CHEBI:29034"/>
    </ligand>
</feature>
<feature type="binding site" evidence="1">
    <location>
        <position position="172"/>
    </location>
    <ligand>
        <name>Mn(2+)</name>
        <dbReference type="ChEBI" id="CHEBI:29035"/>
    </ligand>
</feature>
<feature type="binding site" evidence="1">
    <location>
        <position position="176"/>
    </location>
    <ligand>
        <name>Fe(3+)</name>
        <dbReference type="ChEBI" id="CHEBI:29034"/>
    </ligand>
</feature>
<feature type="binding site" evidence="1">
    <location>
        <position position="176"/>
    </location>
    <ligand>
        <name>Mn(2+)</name>
        <dbReference type="ChEBI" id="CHEBI:29035"/>
    </ligand>
</feature>